<accession>Q7ZZC6</accession>
<accession>Q3B7F7</accession>
<dbReference type="EMBL" id="AY277636">
    <property type="protein sequence ID" value="AAP33276.1"/>
    <property type="molecule type" value="mRNA"/>
</dbReference>
<dbReference type="EMBL" id="BC107627">
    <property type="protein sequence ID" value="AAI07628.1"/>
    <property type="molecule type" value="mRNA"/>
</dbReference>
<dbReference type="RefSeq" id="NP_991153.2">
    <property type="nucleotide sequence ID" value="NM_205590.2"/>
</dbReference>
<dbReference type="SMR" id="Q7ZZC6"/>
<dbReference type="FunCoup" id="Q7ZZC6">
    <property type="interactions" value="2300"/>
</dbReference>
<dbReference type="STRING" id="7955.ENSDARP00000038262"/>
<dbReference type="PaxDb" id="7955-ENSDARP00000038262"/>
<dbReference type="GeneID" id="402852"/>
<dbReference type="KEGG" id="dre:402852"/>
<dbReference type="AGR" id="ZFIN:ZDB-GENE-040611-4"/>
<dbReference type="CTD" id="402852"/>
<dbReference type="ZFIN" id="ZDB-GENE-040611-4">
    <property type="gene designation" value="pane1"/>
</dbReference>
<dbReference type="eggNOG" id="ENOG502S17M">
    <property type="taxonomic scope" value="Eukaryota"/>
</dbReference>
<dbReference type="InParanoid" id="Q7ZZC6"/>
<dbReference type="OrthoDB" id="2386686at2759"/>
<dbReference type="PhylomeDB" id="Q7ZZC6"/>
<dbReference type="PRO" id="PR:Q7ZZC6"/>
<dbReference type="Proteomes" id="UP000000437">
    <property type="component" value="Chromosome 1"/>
</dbReference>
<dbReference type="GO" id="GO:0000775">
    <property type="term" value="C:chromosome, centromeric region"/>
    <property type="evidence" value="ECO:0007669"/>
    <property type="project" value="UniProtKB-SubCell"/>
</dbReference>
<dbReference type="GO" id="GO:0005634">
    <property type="term" value="C:nucleus"/>
    <property type="evidence" value="ECO:0007669"/>
    <property type="project" value="UniProtKB-SubCell"/>
</dbReference>
<dbReference type="Gene3D" id="3.40.50.300">
    <property type="entry name" value="P-loop containing nucleotide triphosphate hydrolases"/>
    <property type="match status" value="1"/>
</dbReference>
<dbReference type="InterPro" id="IPR020987">
    <property type="entry name" value="Centromere_Cenp-M"/>
</dbReference>
<dbReference type="InterPro" id="IPR027417">
    <property type="entry name" value="P-loop_NTPase"/>
</dbReference>
<dbReference type="PANTHER" id="PTHR34436">
    <property type="entry name" value="CENTROMERE PROTEIN M"/>
    <property type="match status" value="1"/>
</dbReference>
<dbReference type="PANTHER" id="PTHR34436:SF1">
    <property type="entry name" value="CENTROMERE PROTEIN M"/>
    <property type="match status" value="1"/>
</dbReference>
<dbReference type="Pfam" id="PF11111">
    <property type="entry name" value="CENP-M"/>
    <property type="match status" value="1"/>
</dbReference>
<sequence length="186" mass="20493">MALLSPYSKVPELNTATVLLVENEEELQNKLANAIVQHEKDFNVNVRLAKKLPLPVENKEARPRIDLIVFIVSLLSERSLQSAESSLSHLHSDCFLGKVCFLVTDARCGSHTQERLVSVRKLAASHHCPVICAEHRTADGVSAAALRLLNILQVSAGMTPMSTTALYLSTLTRCSLTSDLQEDYLQ</sequence>
<organism>
    <name type="scientific">Danio rerio</name>
    <name type="common">Zebrafish</name>
    <name type="synonym">Brachydanio rerio</name>
    <dbReference type="NCBI Taxonomy" id="7955"/>
    <lineage>
        <taxon>Eukaryota</taxon>
        <taxon>Metazoa</taxon>
        <taxon>Chordata</taxon>
        <taxon>Craniata</taxon>
        <taxon>Vertebrata</taxon>
        <taxon>Euteleostomi</taxon>
        <taxon>Actinopterygii</taxon>
        <taxon>Neopterygii</taxon>
        <taxon>Teleostei</taxon>
        <taxon>Ostariophysi</taxon>
        <taxon>Cypriniformes</taxon>
        <taxon>Danionidae</taxon>
        <taxon>Danioninae</taxon>
        <taxon>Danio</taxon>
    </lineage>
</organism>
<reference key="1">
    <citation type="journal article" date="2004" name="Gene Expr. Patterns">
        <title>The proliferation associated nuclear element (PANE1) is conserved between mammals and fish and preferentially expressed in activated lymphoid cells.</title>
        <authorList>
            <person name="Bierie B."/>
            <person name="Edwin M."/>
            <person name="Melenhorst J.J."/>
            <person name="Hennighausen L."/>
        </authorList>
    </citation>
    <scope>NUCLEOTIDE SEQUENCE [MRNA]</scope>
    <scope>SUBCELLULAR LOCATION</scope>
</reference>
<reference key="2">
    <citation type="submission" date="2005-10" db="EMBL/GenBank/DDBJ databases">
        <authorList>
            <consortium name="NIH - Zebrafish Gene Collection (ZGC) project"/>
        </authorList>
    </citation>
    <scope>NUCLEOTIDE SEQUENCE [LARGE SCALE MRNA]</scope>
    <source>
        <tissue>Embryo</tissue>
    </source>
</reference>
<name>CENPM_DANRE</name>
<keyword id="KW-0137">Centromere</keyword>
<keyword id="KW-0158">Chromosome</keyword>
<keyword id="KW-0539">Nucleus</keyword>
<keyword id="KW-1185">Reference proteome</keyword>
<comment type="function">
    <text evidence="1">Probable component of a centromeric complex involved in assembly of kinetochore proteins, mitotic progression and chromosome segregation.</text>
</comment>
<comment type="subcellular location">
    <subcellularLocation>
        <location evidence="3">Nucleus</location>
    </subcellularLocation>
    <subcellularLocation>
        <location evidence="3">Chromosome</location>
        <location evidence="3">Centromere</location>
    </subcellularLocation>
    <text evidence="2">Localizes exclusively in the centromeres.</text>
</comment>
<protein>
    <recommendedName>
        <fullName>Centromere protein M</fullName>
        <shortName>CENP-M</shortName>
    </recommendedName>
    <alternativeName>
        <fullName>Proliferation-associated nuclear element 1</fullName>
    </alternativeName>
</protein>
<gene>
    <name type="primary">cenpm</name>
    <name type="synonym">pane1</name>
    <name type="ORF">zgc:123137</name>
</gene>
<feature type="chain" id="PRO_0000249491" description="Centromere protein M">
    <location>
        <begin position="1"/>
        <end position="186"/>
    </location>
</feature>
<feature type="sequence conflict" description="In Ref. 2; AAI07628." evidence="2" ref="2">
    <original>S</original>
    <variation>N</variation>
    <location>
        <position position="118"/>
    </location>
</feature>
<feature type="sequence conflict" description="In Ref. 2; AAI07628." evidence="2" ref="2">
    <original>D</original>
    <variation>E</variation>
    <location>
        <position position="139"/>
    </location>
</feature>
<feature type="sequence conflict" description="In Ref. 2; AAI07628." evidence="2" ref="2">
    <original>M</original>
    <variation>I</variation>
    <location>
        <position position="161"/>
    </location>
</feature>
<proteinExistence type="evidence at transcript level"/>
<evidence type="ECO:0000250" key="1"/>
<evidence type="ECO:0000305" key="2"/>
<evidence type="ECO:0000305" key="3">
    <source>
    </source>
</evidence>